<proteinExistence type="inferred from homology"/>
<protein>
    <recommendedName>
        <fullName evidence="1">(4S)-4-hydroxy-5-phosphonooxypentane-2,3-dione isomerase</fullName>
        <ecNumber evidence="1">5.3.1.32</ecNumber>
    </recommendedName>
    <alternativeName>
        <fullName evidence="1">Autoinducer 2-degrading protein LsrG</fullName>
        <shortName evidence="1">AI-2-degrading protein LsrG</shortName>
    </alternativeName>
    <alternativeName>
        <fullName evidence="1">Phospho-(S)-4,5-dihydroxy-2,3-pentanedione isomerase</fullName>
    </alternativeName>
    <alternativeName>
        <fullName evidence="1">Phospho-AI-2 isomerase</fullName>
    </alternativeName>
</protein>
<gene>
    <name evidence="1" type="primary">lsrG</name>
    <name type="ordered locus">SFV_1575</name>
</gene>
<evidence type="ECO:0000255" key="1">
    <source>
        <dbReference type="HAMAP-Rule" id="MF_02051"/>
    </source>
</evidence>
<feature type="chain" id="PRO_0000351575" description="(4S)-4-hydroxy-5-phosphonooxypentane-2,3-dione isomerase">
    <location>
        <begin position="1"/>
        <end position="96"/>
    </location>
</feature>
<feature type="domain" description="ABM" evidence="1">
    <location>
        <begin position="2"/>
        <end position="91"/>
    </location>
</feature>
<organism>
    <name type="scientific">Shigella flexneri serotype 5b (strain 8401)</name>
    <dbReference type="NCBI Taxonomy" id="373384"/>
    <lineage>
        <taxon>Bacteria</taxon>
        <taxon>Pseudomonadati</taxon>
        <taxon>Pseudomonadota</taxon>
        <taxon>Gammaproteobacteria</taxon>
        <taxon>Enterobacterales</taxon>
        <taxon>Enterobacteriaceae</taxon>
        <taxon>Shigella</taxon>
    </lineage>
</organism>
<comment type="function">
    <text evidence="1">Involved in the degradation of phospho-AI-2, thereby terminating induction of the lsr operon and closing the AI-2 signaling cycle. Catalyzes the conversion of (4S)-4-hydroxy-5-phosphonooxypentane-2,3-dione (P-DPD) to 3-hydroxy-5-phosphonooxypentane-2,4-dione (P-HPD).</text>
</comment>
<comment type="catalytic activity">
    <reaction evidence="1">
        <text>(2S)-2-hydroxy-3,4-dioxopentyl phosphate = 3-hydroxy-2,4-dioxopentyl phosphate</text>
        <dbReference type="Rhea" id="RHEA:44360"/>
        <dbReference type="ChEBI" id="CHEBI:71677"/>
        <dbReference type="ChEBI" id="CHEBI:84359"/>
        <dbReference type="EC" id="5.3.1.32"/>
    </reaction>
</comment>
<comment type="subunit">
    <text evidence="1">Homodimer.</text>
</comment>
<comment type="subcellular location">
    <subcellularLocation>
        <location evidence="1">Cytoplasm</location>
    </subcellularLocation>
</comment>
<comment type="similarity">
    <text evidence="1">Belongs to the LsrG family.</text>
</comment>
<accession>Q0T4L3</accession>
<reference key="1">
    <citation type="journal article" date="2006" name="BMC Genomics">
        <title>Complete genome sequence of Shigella flexneri 5b and comparison with Shigella flexneri 2a.</title>
        <authorList>
            <person name="Nie H."/>
            <person name="Yang F."/>
            <person name="Zhang X."/>
            <person name="Yang J."/>
            <person name="Chen L."/>
            <person name="Wang J."/>
            <person name="Xiong Z."/>
            <person name="Peng J."/>
            <person name="Sun L."/>
            <person name="Dong J."/>
            <person name="Xue Y."/>
            <person name="Xu X."/>
            <person name="Chen S."/>
            <person name="Yao Z."/>
            <person name="Shen Y."/>
            <person name="Jin Q."/>
        </authorList>
    </citation>
    <scope>NUCLEOTIDE SEQUENCE [LARGE SCALE GENOMIC DNA]</scope>
    <source>
        <strain>8401</strain>
    </source>
</reference>
<sequence length="96" mass="11285">MHVTLVEINVHEDKVDEFIEVFRQNHLGSVQEEGNLRFDVLQDPEVNSRFYIYEAYKDEDTVAFHKTTPHYKTCVAKLESLMTGPRKKRLFNGLMP</sequence>
<dbReference type="EC" id="5.3.1.32" evidence="1"/>
<dbReference type="EMBL" id="CP000266">
    <property type="protein sequence ID" value="ABF03752.1"/>
    <property type="molecule type" value="Genomic_DNA"/>
</dbReference>
<dbReference type="RefSeq" id="WP_000558531.1">
    <property type="nucleotide sequence ID" value="NC_008258.1"/>
</dbReference>
<dbReference type="SMR" id="Q0T4L3"/>
<dbReference type="KEGG" id="sfv:SFV_1575"/>
<dbReference type="HOGENOM" id="CLU_131496_3_0_6"/>
<dbReference type="Proteomes" id="UP000000659">
    <property type="component" value="Chromosome"/>
</dbReference>
<dbReference type="GO" id="GO:0005829">
    <property type="term" value="C:cytosol"/>
    <property type="evidence" value="ECO:0007669"/>
    <property type="project" value="TreeGrafter"/>
</dbReference>
<dbReference type="GO" id="GO:0002952">
    <property type="term" value="F:(4S)-4-hydroxy-5-phosphonooxypentane-2,3-dione isomerase activity"/>
    <property type="evidence" value="ECO:0007669"/>
    <property type="project" value="UniProtKB-EC"/>
</dbReference>
<dbReference type="GO" id="GO:0016491">
    <property type="term" value="F:oxidoreductase activity"/>
    <property type="evidence" value="ECO:0007669"/>
    <property type="project" value="TreeGrafter"/>
</dbReference>
<dbReference type="FunFam" id="3.30.70.100:FF:000016">
    <property type="entry name" value="(4S)-4-hydroxy-5-phosphonooxypentane-2,3-dione isomerase"/>
    <property type="match status" value="1"/>
</dbReference>
<dbReference type="Gene3D" id="3.30.70.100">
    <property type="match status" value="1"/>
</dbReference>
<dbReference type="HAMAP" id="MF_02051">
    <property type="entry name" value="LsrG"/>
    <property type="match status" value="1"/>
</dbReference>
<dbReference type="InterPro" id="IPR007138">
    <property type="entry name" value="ABM_dom"/>
</dbReference>
<dbReference type="InterPro" id="IPR050744">
    <property type="entry name" value="AI-2_Isomerase_LsrG"/>
</dbReference>
<dbReference type="InterPro" id="IPR011008">
    <property type="entry name" value="Dimeric_a/b-barrel"/>
</dbReference>
<dbReference type="InterPro" id="IPR033672">
    <property type="entry name" value="LsrG"/>
</dbReference>
<dbReference type="NCBIfam" id="NF007791">
    <property type="entry name" value="PRK10486.1"/>
    <property type="match status" value="1"/>
</dbReference>
<dbReference type="PANTHER" id="PTHR33336:SF1">
    <property type="entry name" value="(4S)-4-HYDROXY-5-PHOSPHONOOXYPENTANE-2,3-DIONE ISOMERASE"/>
    <property type="match status" value="1"/>
</dbReference>
<dbReference type="PANTHER" id="PTHR33336">
    <property type="entry name" value="QUINOL MONOOXYGENASE YGIN-RELATED"/>
    <property type="match status" value="1"/>
</dbReference>
<dbReference type="Pfam" id="PF03992">
    <property type="entry name" value="ABM"/>
    <property type="match status" value="1"/>
</dbReference>
<dbReference type="SUPFAM" id="SSF54909">
    <property type="entry name" value="Dimeric alpha+beta barrel"/>
    <property type="match status" value="1"/>
</dbReference>
<dbReference type="PROSITE" id="PS51725">
    <property type="entry name" value="ABM"/>
    <property type="match status" value="1"/>
</dbReference>
<keyword id="KW-0963">Cytoplasm</keyword>
<keyword id="KW-0413">Isomerase</keyword>
<name>LSRG_SHIF8</name>